<comment type="function">
    <text evidence="1">Cleaves both 3' and 5' ssDNA extremities of branched DNA structures.</text>
</comment>
<comment type="subcellular location">
    <subcellularLocation>
        <location evidence="1">Cytoplasm</location>
    </subcellularLocation>
</comment>
<comment type="similarity">
    <text evidence="1">Belongs to the NucS endonuclease family.</text>
</comment>
<gene>
    <name evidence="1" type="primary">nucS</name>
    <name type="ordered locus">cgR_1294</name>
</gene>
<name>NUCS_CORGB</name>
<protein>
    <recommendedName>
        <fullName evidence="1">Endonuclease NucS</fullName>
        <ecNumber evidence="1">3.1.-.-</ecNumber>
    </recommendedName>
</protein>
<organism>
    <name type="scientific">Corynebacterium glutamicum (strain R)</name>
    <dbReference type="NCBI Taxonomy" id="340322"/>
    <lineage>
        <taxon>Bacteria</taxon>
        <taxon>Bacillati</taxon>
        <taxon>Actinomycetota</taxon>
        <taxon>Actinomycetes</taxon>
        <taxon>Mycobacteriales</taxon>
        <taxon>Corynebacteriaceae</taxon>
        <taxon>Corynebacterium</taxon>
    </lineage>
</organism>
<sequence length="230" mass="25616">MRLVIARCSVDYVGRLEAHLPSADRLLMVKADGSVSIHADDRAYKPLNWMTPPCSLVETPITDEDGEATGESLWVVENKKGEQLRITVEKIHSEQNFDLGEDPGLVKDGVEDHLQELLAEHITTLGDGYTLIRREYPTAIGPVDILCRNSDGETVAVEIKRRGGIDGVEQLTRYLELLNRDELLKPVHGVFAAQEIKPQAKTLAEDRGIKCVTLDYQALRGIESNELTLF</sequence>
<reference key="1">
    <citation type="journal article" date="2007" name="Microbiology">
        <title>Comparative analysis of the Corynebacterium glutamicum group and complete genome sequence of strain R.</title>
        <authorList>
            <person name="Yukawa H."/>
            <person name="Omumasaba C.A."/>
            <person name="Nonaka H."/>
            <person name="Kos P."/>
            <person name="Okai N."/>
            <person name="Suzuki N."/>
            <person name="Suda M."/>
            <person name="Tsuge Y."/>
            <person name="Watanabe J."/>
            <person name="Ikeda Y."/>
            <person name="Vertes A.A."/>
            <person name="Inui M."/>
        </authorList>
    </citation>
    <scope>NUCLEOTIDE SEQUENCE [LARGE SCALE GENOMIC DNA]</scope>
    <source>
        <strain>R</strain>
    </source>
</reference>
<feature type="chain" id="PRO_1000045828" description="Endonuclease NucS">
    <location>
        <begin position="1"/>
        <end position="230"/>
    </location>
</feature>
<keyword id="KW-0963">Cytoplasm</keyword>
<keyword id="KW-0238">DNA-binding</keyword>
<keyword id="KW-0255">Endonuclease</keyword>
<keyword id="KW-0378">Hydrolase</keyword>
<keyword id="KW-0540">Nuclease</keyword>
<accession>A4QDH7</accession>
<evidence type="ECO:0000255" key="1">
    <source>
        <dbReference type="HAMAP-Rule" id="MF_00722"/>
    </source>
</evidence>
<proteinExistence type="inferred from homology"/>
<dbReference type="EC" id="3.1.-.-" evidence="1"/>
<dbReference type="EMBL" id="AP009044">
    <property type="protein sequence ID" value="BAF54274.1"/>
    <property type="molecule type" value="Genomic_DNA"/>
</dbReference>
<dbReference type="RefSeq" id="WP_003854828.1">
    <property type="nucleotide sequence ID" value="NC_009342.1"/>
</dbReference>
<dbReference type="SMR" id="A4QDH7"/>
<dbReference type="KEGG" id="cgt:cgR_1294"/>
<dbReference type="HOGENOM" id="CLU_069350_0_0_11"/>
<dbReference type="PhylomeDB" id="A4QDH7"/>
<dbReference type="Proteomes" id="UP000006698">
    <property type="component" value="Chromosome"/>
</dbReference>
<dbReference type="GO" id="GO:0005737">
    <property type="term" value="C:cytoplasm"/>
    <property type="evidence" value="ECO:0007669"/>
    <property type="project" value="UniProtKB-SubCell"/>
</dbReference>
<dbReference type="GO" id="GO:0003677">
    <property type="term" value="F:DNA binding"/>
    <property type="evidence" value="ECO:0007669"/>
    <property type="project" value="UniProtKB-KW"/>
</dbReference>
<dbReference type="GO" id="GO:0000014">
    <property type="term" value="F:single-stranded DNA endodeoxyribonuclease activity"/>
    <property type="evidence" value="ECO:0007669"/>
    <property type="project" value="UniProtKB-UniRule"/>
</dbReference>
<dbReference type="CDD" id="cd22341">
    <property type="entry name" value="NucS-like"/>
    <property type="match status" value="1"/>
</dbReference>
<dbReference type="Gene3D" id="2.70.180.20">
    <property type="match status" value="1"/>
</dbReference>
<dbReference type="Gene3D" id="3.40.1350.10">
    <property type="match status" value="1"/>
</dbReference>
<dbReference type="HAMAP" id="MF_00722">
    <property type="entry name" value="NucS"/>
    <property type="match status" value="1"/>
</dbReference>
<dbReference type="InterPro" id="IPR002793">
    <property type="entry name" value="Endonuclease_NucS"/>
</dbReference>
<dbReference type="InterPro" id="IPR048301">
    <property type="entry name" value="NucS_C"/>
</dbReference>
<dbReference type="InterPro" id="IPR048302">
    <property type="entry name" value="NucS_N"/>
</dbReference>
<dbReference type="InterPro" id="IPR049173">
    <property type="entry name" value="NucS_N_sf"/>
</dbReference>
<dbReference type="InterPro" id="IPR011335">
    <property type="entry name" value="Restrct_endonuc-II-like"/>
</dbReference>
<dbReference type="InterPro" id="IPR011856">
    <property type="entry name" value="tRNA_endonuc-like_dom_sf"/>
</dbReference>
<dbReference type="NCBIfam" id="NF002876">
    <property type="entry name" value="PRK03298.1"/>
    <property type="match status" value="1"/>
</dbReference>
<dbReference type="PANTHER" id="PTHR38814">
    <property type="entry name" value="ENDONUCLEASE NUCS"/>
    <property type="match status" value="1"/>
</dbReference>
<dbReference type="PANTHER" id="PTHR38814:SF1">
    <property type="entry name" value="ENDONUCLEASE NUCS"/>
    <property type="match status" value="1"/>
</dbReference>
<dbReference type="Pfam" id="PF01939">
    <property type="entry name" value="NucS_C"/>
    <property type="match status" value="1"/>
</dbReference>
<dbReference type="Pfam" id="PF21003">
    <property type="entry name" value="NucS_N"/>
    <property type="match status" value="1"/>
</dbReference>
<dbReference type="SUPFAM" id="SSF52980">
    <property type="entry name" value="Restriction endonuclease-like"/>
    <property type="match status" value="1"/>
</dbReference>